<organism>
    <name type="scientific">Bacillus velezensis (strain DSM 23117 / BGSC 10A6 / LMG 26770 / FZB42)</name>
    <name type="common">Bacillus amyloliquefaciens subsp. plantarum</name>
    <dbReference type="NCBI Taxonomy" id="326423"/>
    <lineage>
        <taxon>Bacteria</taxon>
        <taxon>Bacillati</taxon>
        <taxon>Bacillota</taxon>
        <taxon>Bacilli</taxon>
        <taxon>Bacillales</taxon>
        <taxon>Bacillaceae</taxon>
        <taxon>Bacillus</taxon>
        <taxon>Bacillus amyloliquefaciens group</taxon>
    </lineage>
</organism>
<evidence type="ECO:0000255" key="1">
    <source>
        <dbReference type="HAMAP-Rule" id="MF_00012"/>
    </source>
</evidence>
<keyword id="KW-0001">2Fe-2S</keyword>
<keyword id="KW-0028">Amino-acid biosynthesis</keyword>
<keyword id="KW-0100">Branched-chain amino acid biosynthesis</keyword>
<keyword id="KW-0408">Iron</keyword>
<keyword id="KW-0411">Iron-sulfur</keyword>
<keyword id="KW-0456">Lyase</keyword>
<keyword id="KW-0460">Magnesium</keyword>
<keyword id="KW-0479">Metal-binding</keyword>
<comment type="function">
    <text evidence="1">Functions in the biosynthesis of branched-chain amino acids. Catalyzes the dehydration of (2R,3R)-2,3-dihydroxy-3-methylpentanoate (2,3-dihydroxy-3-methylvalerate) into 2-oxo-3-methylpentanoate (2-oxo-3-methylvalerate) and of (2R)-2,3-dihydroxy-3-methylbutanoate (2,3-dihydroxyisovalerate) into 2-oxo-3-methylbutanoate (2-oxoisovalerate), the penultimate precursor to L-isoleucine and L-valine, respectively.</text>
</comment>
<comment type="catalytic activity">
    <reaction evidence="1">
        <text>(2R)-2,3-dihydroxy-3-methylbutanoate = 3-methyl-2-oxobutanoate + H2O</text>
        <dbReference type="Rhea" id="RHEA:24809"/>
        <dbReference type="ChEBI" id="CHEBI:11851"/>
        <dbReference type="ChEBI" id="CHEBI:15377"/>
        <dbReference type="ChEBI" id="CHEBI:49072"/>
        <dbReference type="EC" id="4.2.1.9"/>
    </reaction>
    <physiologicalReaction direction="left-to-right" evidence="1">
        <dbReference type="Rhea" id="RHEA:24810"/>
    </physiologicalReaction>
</comment>
<comment type="catalytic activity">
    <reaction evidence="1">
        <text>(2R,3R)-2,3-dihydroxy-3-methylpentanoate = (S)-3-methyl-2-oxopentanoate + H2O</text>
        <dbReference type="Rhea" id="RHEA:27694"/>
        <dbReference type="ChEBI" id="CHEBI:15377"/>
        <dbReference type="ChEBI" id="CHEBI:35146"/>
        <dbReference type="ChEBI" id="CHEBI:49258"/>
        <dbReference type="EC" id="4.2.1.9"/>
    </reaction>
    <physiologicalReaction direction="left-to-right" evidence="1">
        <dbReference type="Rhea" id="RHEA:27695"/>
    </physiologicalReaction>
</comment>
<comment type="cofactor">
    <cofactor evidence="1">
        <name>[2Fe-2S] cluster</name>
        <dbReference type="ChEBI" id="CHEBI:190135"/>
    </cofactor>
    <text evidence="1">Binds 1 [2Fe-2S] cluster per subunit. This cluster acts as a Lewis acid cofactor.</text>
</comment>
<comment type="cofactor">
    <cofactor evidence="1">
        <name>Mg(2+)</name>
        <dbReference type="ChEBI" id="CHEBI:18420"/>
    </cofactor>
</comment>
<comment type="pathway">
    <text evidence="1">Amino-acid biosynthesis; L-isoleucine biosynthesis; L-isoleucine from 2-oxobutanoate: step 3/4.</text>
</comment>
<comment type="pathway">
    <text evidence="1">Amino-acid biosynthesis; L-valine biosynthesis; L-valine from pyruvate: step 3/4.</text>
</comment>
<comment type="subunit">
    <text evidence="1">Homodimer.</text>
</comment>
<comment type="similarity">
    <text evidence="1">Belongs to the IlvD/Edd family.</text>
</comment>
<protein>
    <recommendedName>
        <fullName evidence="1">Dihydroxy-acid dehydratase</fullName>
        <shortName evidence="1">DAD</shortName>
        <ecNumber evidence="1">4.2.1.9</ecNumber>
    </recommendedName>
</protein>
<gene>
    <name evidence="1" type="primary">ilvD</name>
    <name type="ordered locus">RBAM_020010</name>
</gene>
<reference key="1">
    <citation type="journal article" date="2007" name="Nat. Biotechnol.">
        <title>Comparative analysis of the complete genome sequence of the plant growth-promoting bacterium Bacillus amyloliquefaciens FZB42.</title>
        <authorList>
            <person name="Chen X.H."/>
            <person name="Koumoutsi A."/>
            <person name="Scholz R."/>
            <person name="Eisenreich A."/>
            <person name="Schneider K."/>
            <person name="Heinemeyer I."/>
            <person name="Morgenstern B."/>
            <person name="Voss B."/>
            <person name="Hess W.R."/>
            <person name="Reva O."/>
            <person name="Junge H."/>
            <person name="Voigt B."/>
            <person name="Jungblut P.R."/>
            <person name="Vater J."/>
            <person name="Suessmuth R."/>
            <person name="Liesegang H."/>
            <person name="Strittmatter A."/>
            <person name="Gottschalk G."/>
            <person name="Borriss R."/>
        </authorList>
    </citation>
    <scope>NUCLEOTIDE SEQUENCE [LARGE SCALE GENOMIC DNA]</scope>
    <source>
        <strain>DSM 23117 / BGSC 10A6 / LMG 26770 / FZB42</strain>
    </source>
</reference>
<feature type="chain" id="PRO_1000000956" description="Dihydroxy-acid dehydratase">
    <location>
        <begin position="1"/>
        <end position="558"/>
    </location>
</feature>
<feature type="active site" description="Proton acceptor" evidence="1">
    <location>
        <position position="473"/>
    </location>
</feature>
<feature type="binding site" evidence="1">
    <location>
        <position position="81"/>
    </location>
    <ligand>
        <name>Mg(2+)</name>
        <dbReference type="ChEBI" id="CHEBI:18420"/>
    </ligand>
</feature>
<feature type="binding site" evidence="1">
    <location>
        <position position="122"/>
    </location>
    <ligand>
        <name>[2Fe-2S] cluster</name>
        <dbReference type="ChEBI" id="CHEBI:190135"/>
    </ligand>
</feature>
<feature type="binding site" evidence="1">
    <location>
        <position position="123"/>
    </location>
    <ligand>
        <name>Mg(2+)</name>
        <dbReference type="ChEBI" id="CHEBI:18420"/>
    </ligand>
</feature>
<feature type="binding site" description="via carbamate group" evidence="1">
    <location>
        <position position="124"/>
    </location>
    <ligand>
        <name>Mg(2+)</name>
        <dbReference type="ChEBI" id="CHEBI:18420"/>
    </ligand>
</feature>
<feature type="binding site" evidence="1">
    <location>
        <position position="195"/>
    </location>
    <ligand>
        <name>[2Fe-2S] cluster</name>
        <dbReference type="ChEBI" id="CHEBI:190135"/>
    </ligand>
</feature>
<feature type="binding site" evidence="1">
    <location>
        <position position="447"/>
    </location>
    <ligand>
        <name>Mg(2+)</name>
        <dbReference type="ChEBI" id="CHEBI:18420"/>
    </ligand>
</feature>
<feature type="modified residue" description="N6-carboxylysine" evidence="1">
    <location>
        <position position="124"/>
    </location>
</feature>
<name>ILVD_BACVZ</name>
<accession>A7Z5T7</accession>
<dbReference type="EC" id="4.2.1.9" evidence="1"/>
<dbReference type="EMBL" id="CP000560">
    <property type="protein sequence ID" value="ABS74363.1"/>
    <property type="molecule type" value="Genomic_DNA"/>
</dbReference>
<dbReference type="RefSeq" id="WP_007409524.1">
    <property type="nucleotide sequence ID" value="NC_009725.2"/>
</dbReference>
<dbReference type="SMR" id="A7Z5T7"/>
<dbReference type="GeneID" id="93081130"/>
<dbReference type="KEGG" id="bay:RBAM_020010"/>
<dbReference type="HOGENOM" id="CLU_014271_4_2_9"/>
<dbReference type="UniPathway" id="UPA00047">
    <property type="reaction ID" value="UER00057"/>
</dbReference>
<dbReference type="UniPathway" id="UPA00049">
    <property type="reaction ID" value="UER00061"/>
</dbReference>
<dbReference type="Proteomes" id="UP000001120">
    <property type="component" value="Chromosome"/>
</dbReference>
<dbReference type="GO" id="GO:0005829">
    <property type="term" value="C:cytosol"/>
    <property type="evidence" value="ECO:0007669"/>
    <property type="project" value="TreeGrafter"/>
</dbReference>
<dbReference type="GO" id="GO:0051537">
    <property type="term" value="F:2 iron, 2 sulfur cluster binding"/>
    <property type="evidence" value="ECO:0007669"/>
    <property type="project" value="UniProtKB-UniRule"/>
</dbReference>
<dbReference type="GO" id="GO:0004160">
    <property type="term" value="F:dihydroxy-acid dehydratase activity"/>
    <property type="evidence" value="ECO:0007669"/>
    <property type="project" value="UniProtKB-UniRule"/>
</dbReference>
<dbReference type="GO" id="GO:0000287">
    <property type="term" value="F:magnesium ion binding"/>
    <property type="evidence" value="ECO:0007669"/>
    <property type="project" value="UniProtKB-UniRule"/>
</dbReference>
<dbReference type="GO" id="GO:0009097">
    <property type="term" value="P:isoleucine biosynthetic process"/>
    <property type="evidence" value="ECO:0007669"/>
    <property type="project" value="UniProtKB-UniRule"/>
</dbReference>
<dbReference type="GO" id="GO:0009099">
    <property type="term" value="P:L-valine biosynthetic process"/>
    <property type="evidence" value="ECO:0007669"/>
    <property type="project" value="UniProtKB-UniRule"/>
</dbReference>
<dbReference type="FunFam" id="3.50.30.80:FF:000001">
    <property type="entry name" value="Dihydroxy-acid dehydratase"/>
    <property type="match status" value="1"/>
</dbReference>
<dbReference type="Gene3D" id="3.50.30.80">
    <property type="entry name" value="IlvD/EDD C-terminal domain-like"/>
    <property type="match status" value="1"/>
</dbReference>
<dbReference type="HAMAP" id="MF_00012">
    <property type="entry name" value="IlvD"/>
    <property type="match status" value="1"/>
</dbReference>
<dbReference type="InterPro" id="IPR042096">
    <property type="entry name" value="Dihydro-acid_dehy_C"/>
</dbReference>
<dbReference type="InterPro" id="IPR004404">
    <property type="entry name" value="DihydroxyA_deHydtase"/>
</dbReference>
<dbReference type="InterPro" id="IPR020558">
    <property type="entry name" value="DiOHA_6PGluconate_deHydtase_CS"/>
</dbReference>
<dbReference type="InterPro" id="IPR056740">
    <property type="entry name" value="ILV_EDD_C"/>
</dbReference>
<dbReference type="InterPro" id="IPR000581">
    <property type="entry name" value="ILV_EDD_N"/>
</dbReference>
<dbReference type="InterPro" id="IPR037237">
    <property type="entry name" value="IlvD/EDD_N"/>
</dbReference>
<dbReference type="NCBIfam" id="TIGR00110">
    <property type="entry name" value="ilvD"/>
    <property type="match status" value="1"/>
</dbReference>
<dbReference type="NCBIfam" id="NF002068">
    <property type="entry name" value="PRK00911.1"/>
    <property type="match status" value="1"/>
</dbReference>
<dbReference type="PANTHER" id="PTHR43661">
    <property type="entry name" value="D-XYLONATE DEHYDRATASE"/>
    <property type="match status" value="1"/>
</dbReference>
<dbReference type="PANTHER" id="PTHR43661:SF3">
    <property type="entry name" value="D-XYLONATE DEHYDRATASE YAGF-RELATED"/>
    <property type="match status" value="1"/>
</dbReference>
<dbReference type="Pfam" id="PF24877">
    <property type="entry name" value="ILV_EDD_C"/>
    <property type="match status" value="1"/>
</dbReference>
<dbReference type="Pfam" id="PF00920">
    <property type="entry name" value="ILVD_EDD_N"/>
    <property type="match status" value="1"/>
</dbReference>
<dbReference type="SUPFAM" id="SSF143975">
    <property type="entry name" value="IlvD/EDD N-terminal domain-like"/>
    <property type="match status" value="1"/>
</dbReference>
<dbReference type="SUPFAM" id="SSF52016">
    <property type="entry name" value="LeuD/IlvD-like"/>
    <property type="match status" value="1"/>
</dbReference>
<dbReference type="PROSITE" id="PS00886">
    <property type="entry name" value="ILVD_EDD_1"/>
    <property type="match status" value="1"/>
</dbReference>
<dbReference type="PROSITE" id="PS00887">
    <property type="entry name" value="ILVD_EDD_2"/>
    <property type="match status" value="1"/>
</dbReference>
<proteinExistence type="inferred from homology"/>
<sequence>MAELRSNMITQGIDRAPHRSLLRAAGVKEEDFGKPFIAVCNSYIDIVPGHVHLQEFGKIVKEAIREAGGVPFEFNTIGVDDGIAMGHIGMRYSLPSREIIADSVETVVSAHWFDGMVCIPNCDKITPGMLMAAMRINIPTIFVSGGPMAAGRTSDGRKISLSSVFEGVGAYQAGKIGESDLQELEQFGCPTCGSCSGMFTANSMNCLSEALGLALPGNGTILATSPERREFVRKSAAQLMETIKKDIKPRDIVTEKAIDNAFALDMALGGSTNTVLHTLALANEAGVEYSLERINEVAERVPHLSKLAPASDVFIEDLHEAGGVSAALNELAKKEGALHLDALTVTGRTLGETIAGHEVKDYDVIHPLDNPFTEKGGLAVLFGNLAPDGAIIKTGGVQDGITRHEGPAVVFDSQDAALEGIINRKVKEGDVVIIRYEGPKGGPGMPEMLAPTSQIVGMGLGPKVALITDGRFSGASRGLSIGHVSPEAAEGGPLAFVENGDHVIVDIEKRILDVQVPEEEWEKRKAEWKGFEPKVKTGYLARYSKLVTSANTGGIMKI</sequence>